<dbReference type="EC" id="2.3.1.-" evidence="1"/>
<dbReference type="EMBL" id="AL009126">
    <property type="protein sequence ID" value="CAB13046.1"/>
    <property type="molecule type" value="Genomic_DNA"/>
</dbReference>
<dbReference type="PIR" id="C69847">
    <property type="entry name" value="C69847"/>
</dbReference>
<dbReference type="RefSeq" id="NP_389071.1">
    <property type="nucleotide sequence ID" value="NC_000964.3"/>
</dbReference>
<dbReference type="RefSeq" id="WP_003245116.1">
    <property type="nucleotide sequence ID" value="NZ_OZ025638.1"/>
</dbReference>
<dbReference type="SMR" id="O31633"/>
<dbReference type="FunCoup" id="O31633">
    <property type="interactions" value="32"/>
</dbReference>
<dbReference type="IntAct" id="O31633">
    <property type="interactions" value="2"/>
</dbReference>
<dbReference type="STRING" id="224308.BSU11890"/>
<dbReference type="PaxDb" id="224308-BSU11890"/>
<dbReference type="EnsemblBacteria" id="CAB13046">
    <property type="protein sequence ID" value="CAB13046"/>
    <property type="gene ID" value="BSU_11890"/>
</dbReference>
<dbReference type="GeneID" id="939406"/>
<dbReference type="KEGG" id="bsu:BSU11890"/>
<dbReference type="PATRIC" id="fig|224308.179.peg.1281"/>
<dbReference type="eggNOG" id="COG1670">
    <property type="taxonomic scope" value="Bacteria"/>
</dbReference>
<dbReference type="InParanoid" id="O31633"/>
<dbReference type="OrthoDB" id="9795206at2"/>
<dbReference type="PhylomeDB" id="O31633"/>
<dbReference type="BioCyc" id="BSUB:BSU11890-MONOMER"/>
<dbReference type="Proteomes" id="UP000001570">
    <property type="component" value="Chromosome"/>
</dbReference>
<dbReference type="GO" id="GO:0005737">
    <property type="term" value="C:cytoplasm"/>
    <property type="evidence" value="ECO:0000318"/>
    <property type="project" value="GO_Central"/>
</dbReference>
<dbReference type="GO" id="GO:0008999">
    <property type="term" value="F:protein-N-terminal-alanine acetyltransferase activity"/>
    <property type="evidence" value="ECO:0000318"/>
    <property type="project" value="GO_Central"/>
</dbReference>
<dbReference type="FunFam" id="3.40.630.30:FF:000005">
    <property type="entry name" value="Ribosomal protein alanine acetyltransferase"/>
    <property type="match status" value="1"/>
</dbReference>
<dbReference type="Gene3D" id="3.40.630.30">
    <property type="match status" value="1"/>
</dbReference>
<dbReference type="InterPro" id="IPR016181">
    <property type="entry name" value="Acyl_CoA_acyltransferase"/>
</dbReference>
<dbReference type="InterPro" id="IPR000182">
    <property type="entry name" value="GNAT_dom"/>
</dbReference>
<dbReference type="InterPro" id="IPR051531">
    <property type="entry name" value="N-acetyltransferase"/>
</dbReference>
<dbReference type="PANTHER" id="PTHR43792:SF8">
    <property type="entry name" value="[RIBOSOMAL PROTEIN US5]-ALANINE N-ACETYLTRANSFERASE"/>
    <property type="match status" value="1"/>
</dbReference>
<dbReference type="PANTHER" id="PTHR43792">
    <property type="entry name" value="GNAT FAMILY, PUTATIVE (AFU_ORTHOLOGUE AFUA_3G00765)-RELATED-RELATED"/>
    <property type="match status" value="1"/>
</dbReference>
<dbReference type="Pfam" id="PF13302">
    <property type="entry name" value="Acetyltransf_3"/>
    <property type="match status" value="1"/>
</dbReference>
<dbReference type="SUPFAM" id="SSF55729">
    <property type="entry name" value="Acyl-CoA N-acyltransferases (Nat)"/>
    <property type="match status" value="1"/>
</dbReference>
<dbReference type="PROSITE" id="PS51186">
    <property type="entry name" value="GNAT"/>
    <property type="match status" value="1"/>
</dbReference>
<comment type="function">
    <text evidence="1">Probable N-terminal protein acetyltransferase.</text>
</comment>
<comment type="catalytic activity">
    <reaction evidence="1">
        <text>an N-terminal L-alpha-aminoacyl-[protein] + acetyl-CoA = N-terminal N(alpha)-acetyl-L-alpha-aminoacyl-[protein] + CoA + H(+)</text>
        <dbReference type="Rhea" id="RHEA:21028"/>
        <dbReference type="Rhea" id="RHEA-COMP:10636"/>
        <dbReference type="Rhea" id="RHEA-COMP:15589"/>
        <dbReference type="ChEBI" id="CHEBI:15378"/>
        <dbReference type="ChEBI" id="CHEBI:57287"/>
        <dbReference type="ChEBI" id="CHEBI:57288"/>
        <dbReference type="ChEBI" id="CHEBI:78597"/>
        <dbReference type="ChEBI" id="CHEBI:78598"/>
    </reaction>
</comment>
<comment type="disruption phenotype">
    <text evidence="3">Non-essential, it can be disrupted (PubMed:12060778).</text>
</comment>
<comment type="similarity">
    <text evidence="4">Belongs to the acetyltransferase family. RimJ subfamily.</text>
</comment>
<accession>O31633</accession>
<name>YJCK_BACSU</name>
<reference key="1">
    <citation type="journal article" date="1997" name="Nature">
        <title>The complete genome sequence of the Gram-positive bacterium Bacillus subtilis.</title>
        <authorList>
            <person name="Kunst F."/>
            <person name="Ogasawara N."/>
            <person name="Moszer I."/>
            <person name="Albertini A.M."/>
            <person name="Alloni G."/>
            <person name="Azevedo V."/>
            <person name="Bertero M.G."/>
            <person name="Bessieres P."/>
            <person name="Bolotin A."/>
            <person name="Borchert S."/>
            <person name="Borriss R."/>
            <person name="Boursier L."/>
            <person name="Brans A."/>
            <person name="Braun M."/>
            <person name="Brignell S.C."/>
            <person name="Bron S."/>
            <person name="Brouillet S."/>
            <person name="Bruschi C.V."/>
            <person name="Caldwell B."/>
            <person name="Capuano V."/>
            <person name="Carter N.M."/>
            <person name="Choi S.-K."/>
            <person name="Codani J.-J."/>
            <person name="Connerton I.F."/>
            <person name="Cummings N.J."/>
            <person name="Daniel R.A."/>
            <person name="Denizot F."/>
            <person name="Devine K.M."/>
            <person name="Duesterhoeft A."/>
            <person name="Ehrlich S.D."/>
            <person name="Emmerson P.T."/>
            <person name="Entian K.-D."/>
            <person name="Errington J."/>
            <person name="Fabret C."/>
            <person name="Ferrari E."/>
            <person name="Foulger D."/>
            <person name="Fritz C."/>
            <person name="Fujita M."/>
            <person name="Fujita Y."/>
            <person name="Fuma S."/>
            <person name="Galizzi A."/>
            <person name="Galleron N."/>
            <person name="Ghim S.-Y."/>
            <person name="Glaser P."/>
            <person name="Goffeau A."/>
            <person name="Golightly E.J."/>
            <person name="Grandi G."/>
            <person name="Guiseppi G."/>
            <person name="Guy B.J."/>
            <person name="Haga K."/>
            <person name="Haiech J."/>
            <person name="Harwood C.R."/>
            <person name="Henaut A."/>
            <person name="Hilbert H."/>
            <person name="Holsappel S."/>
            <person name="Hosono S."/>
            <person name="Hullo M.-F."/>
            <person name="Itaya M."/>
            <person name="Jones L.-M."/>
            <person name="Joris B."/>
            <person name="Karamata D."/>
            <person name="Kasahara Y."/>
            <person name="Klaerr-Blanchard M."/>
            <person name="Klein C."/>
            <person name="Kobayashi Y."/>
            <person name="Koetter P."/>
            <person name="Koningstein G."/>
            <person name="Krogh S."/>
            <person name="Kumano M."/>
            <person name="Kurita K."/>
            <person name="Lapidus A."/>
            <person name="Lardinois S."/>
            <person name="Lauber J."/>
            <person name="Lazarevic V."/>
            <person name="Lee S.-M."/>
            <person name="Levine A."/>
            <person name="Liu H."/>
            <person name="Masuda S."/>
            <person name="Mauel C."/>
            <person name="Medigue C."/>
            <person name="Medina N."/>
            <person name="Mellado R.P."/>
            <person name="Mizuno M."/>
            <person name="Moestl D."/>
            <person name="Nakai S."/>
            <person name="Noback M."/>
            <person name="Noone D."/>
            <person name="O'Reilly M."/>
            <person name="Ogawa K."/>
            <person name="Ogiwara A."/>
            <person name="Oudega B."/>
            <person name="Park S.-H."/>
            <person name="Parro V."/>
            <person name="Pohl T.M."/>
            <person name="Portetelle D."/>
            <person name="Porwollik S."/>
            <person name="Prescott A.M."/>
            <person name="Presecan E."/>
            <person name="Pujic P."/>
            <person name="Purnelle B."/>
            <person name="Rapoport G."/>
            <person name="Rey M."/>
            <person name="Reynolds S."/>
            <person name="Rieger M."/>
            <person name="Rivolta C."/>
            <person name="Rocha E."/>
            <person name="Roche B."/>
            <person name="Rose M."/>
            <person name="Sadaie Y."/>
            <person name="Sato T."/>
            <person name="Scanlan E."/>
            <person name="Schleich S."/>
            <person name="Schroeter R."/>
            <person name="Scoffone F."/>
            <person name="Sekiguchi J."/>
            <person name="Sekowska A."/>
            <person name="Seror S.J."/>
            <person name="Serror P."/>
            <person name="Shin B.-S."/>
            <person name="Soldo B."/>
            <person name="Sorokin A."/>
            <person name="Tacconi E."/>
            <person name="Takagi T."/>
            <person name="Takahashi H."/>
            <person name="Takemaru K."/>
            <person name="Takeuchi M."/>
            <person name="Tamakoshi A."/>
            <person name="Tanaka T."/>
            <person name="Terpstra P."/>
            <person name="Tognoni A."/>
            <person name="Tosato V."/>
            <person name="Uchiyama S."/>
            <person name="Vandenbol M."/>
            <person name="Vannier F."/>
            <person name="Vassarotti A."/>
            <person name="Viari A."/>
            <person name="Wambutt R."/>
            <person name="Wedler E."/>
            <person name="Wedler H."/>
            <person name="Weitzenegger T."/>
            <person name="Winters P."/>
            <person name="Wipat A."/>
            <person name="Yamamoto H."/>
            <person name="Yamane K."/>
            <person name="Yasumoto K."/>
            <person name="Yata K."/>
            <person name="Yoshida K."/>
            <person name="Yoshikawa H.-F."/>
            <person name="Zumstein E."/>
            <person name="Yoshikawa H."/>
            <person name="Danchin A."/>
        </authorList>
    </citation>
    <scope>NUCLEOTIDE SEQUENCE [LARGE SCALE GENOMIC DNA]</scope>
    <source>
        <strain>168</strain>
    </source>
</reference>
<reference key="2">
    <citation type="journal article" date="2002" name="Proc. Natl. Acad. Sci. U.S.A.">
        <title>An expanded view of bacterial DNA replication.</title>
        <authorList>
            <person name="Noirot-Gros M.-F."/>
            <person name="Dervyn E."/>
            <person name="Wu L.J."/>
            <person name="Mervelet P."/>
            <person name="Errington J."/>
            <person name="Ehrlich S.D."/>
            <person name="Noirot P."/>
        </authorList>
    </citation>
    <scope>DISRUPTION PHENOTYPE</scope>
    <source>
        <strain>168</strain>
    </source>
</reference>
<gene>
    <name type="primary">yjcK</name>
    <name type="ordered locus">BSU11890</name>
</gene>
<evidence type="ECO:0000250" key="1">
    <source>
        <dbReference type="UniProtKB" id="P0A948"/>
    </source>
</evidence>
<evidence type="ECO:0000255" key="2">
    <source>
        <dbReference type="PROSITE-ProRule" id="PRU00532"/>
    </source>
</evidence>
<evidence type="ECO:0000269" key="3">
    <source>
    </source>
</evidence>
<evidence type="ECO:0000305" key="4"/>
<proteinExistence type="inferred from homology"/>
<sequence length="181" mass="20925">MLKGKTIYVRPLEVTDAEENLGLQSENRDFFEQFSMIRADDYYTVEGQRKRITEYQERLEKDEEYHFGIFTASDDRLIGTVSLFQIIRGALQTAFIGYFLDKAHNGKGIMTEAVRLVVDYAFHELKLHRIEAGVMPRNLGSMRVLEKAGFHKEGIARKNVKINGVWEDHQVLAILNPDDEQ</sequence>
<organism>
    <name type="scientific">Bacillus subtilis (strain 168)</name>
    <dbReference type="NCBI Taxonomy" id="224308"/>
    <lineage>
        <taxon>Bacteria</taxon>
        <taxon>Bacillati</taxon>
        <taxon>Bacillota</taxon>
        <taxon>Bacilli</taxon>
        <taxon>Bacillales</taxon>
        <taxon>Bacillaceae</taxon>
        <taxon>Bacillus</taxon>
    </lineage>
</organism>
<feature type="chain" id="PRO_0000360496" description="Probable N-acetyltransferase YjcK">
    <location>
        <begin position="1"/>
        <end position="181"/>
    </location>
</feature>
<feature type="domain" description="N-acetyltransferase" evidence="2">
    <location>
        <begin position="7"/>
        <end position="172"/>
    </location>
</feature>
<keyword id="KW-0012">Acyltransferase</keyword>
<keyword id="KW-1185">Reference proteome</keyword>
<keyword id="KW-0808">Transferase</keyword>
<protein>
    <recommendedName>
        <fullName evidence="1">Probable N-acetyltransferase YjcK</fullName>
        <ecNumber evidence="1">2.3.1.-</ecNumber>
    </recommendedName>
</protein>